<comment type="function">
    <text evidence="2">Hydroxycinnamoyl transferase that catalyzes the transfer of an acyl from benzoyl-CoA to tryptamine, to produce benzoyl tryptamine. Serotonin and tyramine serve as acyl acceptors in vitro. Can use p-coumaroyl-CoA, and to a lesser extent caffeoyl-CoA, as acyl donors.</text>
</comment>
<comment type="biophysicochemical properties">
    <kinetics>
        <KM evidence="2">474.7 uM for benzoyl-CoA</KM>
        <KM evidence="2">101.9 uM for p-coumaroyl-CoA</KM>
        <KM evidence="2">979 uM for caffeoyl-CoA</KM>
        <KM evidence="2">10.5 uM for tryptamine</KM>
        <KM evidence="2">19.6 uM for serotonin</KM>
        <KM evidence="2">15 uM for tyramine</KM>
    </kinetics>
</comment>
<comment type="similarity">
    <text evidence="4">Belongs to the plant acyltransferase family.</text>
</comment>
<proteinExistence type="evidence at protein level"/>
<feature type="chain" id="PRO_0000437768" description="Tryptamine benzoyltransferase 1">
    <location>
        <begin position="1"/>
        <end position="445"/>
    </location>
</feature>
<feature type="active site" description="Proton acceptor" evidence="1">
    <location>
        <position position="150"/>
    </location>
</feature>
<feature type="active site" description="Proton acceptor" evidence="1">
    <location>
        <position position="382"/>
    </location>
</feature>
<name>TBT1_ORYSJ</name>
<sequence length="445" mass="47715">MEITSSAMLKTTTTPPHPLAGEKVPLSAFDRAAFDVFVPLVFAYRAPAPSSEAVKEGLRVAVAAYPLVSGRIAVDGQGRRRRRRVLHVNNEGVLVLDATVEVDLDAVLAANVATDLYPALPEHSFGAALLQVQLTRFGCGGLVVGLIGHHHVFDGHSMSTFCATWARAVRDSEAFIVPSPSLDRAITGVPRSPPAPVFDHRSIEFKVGNKSSDSSGAAAAAAVEKIANIGVRFTAKFVAELKARVGGRCSTFECVLAHAWKKITAARGLKPEEFTRVRVAVNCRRRANPPAPADLFGNMVLWAFPRLQVRRLLSSSYRDVVGAIRAAVARVDAEYIQSFVDYVEVADARGEELAATAAEPGETLCPDLEVDSWLGFRFHEMDLGTGPPAAVLSPDLPIEGLMILVPVGGDGGGVDLFVALADDHAQAFEQICYSLEEHAMIHSHL</sequence>
<accession>Q2R0K3</accession>
<keyword id="KW-0012">Acyltransferase</keyword>
<keyword id="KW-1185">Reference proteome</keyword>
<keyword id="KW-0808">Transferase</keyword>
<dbReference type="EC" id="2.3.1.-" evidence="4"/>
<dbReference type="EMBL" id="DP000010">
    <property type="protein sequence ID" value="ABA95026.1"/>
    <property type="molecule type" value="Genomic_DNA"/>
</dbReference>
<dbReference type="EMBL" id="AP008217">
    <property type="protein sequence ID" value="BAH95403.1"/>
    <property type="molecule type" value="Genomic_DNA"/>
</dbReference>
<dbReference type="EMBL" id="AP014967">
    <property type="protein sequence ID" value="BAT15019.1"/>
    <property type="molecule type" value="Genomic_DNA"/>
</dbReference>
<dbReference type="EMBL" id="AK241399">
    <property type="protein sequence ID" value="BAH01021.1"/>
    <property type="molecule type" value="mRNA"/>
</dbReference>
<dbReference type="RefSeq" id="XP_015615935.1">
    <property type="nucleotide sequence ID" value="XM_015760449.1"/>
</dbReference>
<dbReference type="SMR" id="Q2R0K3"/>
<dbReference type="FunCoup" id="Q2R0K3">
    <property type="interactions" value="1"/>
</dbReference>
<dbReference type="STRING" id="39947.Q2R0K3"/>
<dbReference type="PaxDb" id="39947-Q2R0K3"/>
<dbReference type="EnsemblPlants" id="Os11t0642400-01">
    <property type="protein sequence ID" value="Os11t0642400-01"/>
    <property type="gene ID" value="Os11g0642400"/>
</dbReference>
<dbReference type="Gramene" id="Os11t0642400-01">
    <property type="protein sequence ID" value="Os11t0642400-01"/>
    <property type="gene ID" value="Os11g0642400"/>
</dbReference>
<dbReference type="KEGG" id="dosa:Os11g0642400"/>
<dbReference type="eggNOG" id="ENOG502QVP8">
    <property type="taxonomic scope" value="Eukaryota"/>
</dbReference>
<dbReference type="HOGENOM" id="CLU_014546_6_2_1"/>
<dbReference type="InParanoid" id="Q2R0K3"/>
<dbReference type="OMA" id="HEEMEFC"/>
<dbReference type="OrthoDB" id="1862401at2759"/>
<dbReference type="SABIO-RK" id="Q2R0K3"/>
<dbReference type="Proteomes" id="UP000000763">
    <property type="component" value="Chromosome 11"/>
</dbReference>
<dbReference type="Proteomes" id="UP000059680">
    <property type="component" value="Chromosome 11"/>
</dbReference>
<dbReference type="ExpressionAtlas" id="Q2R0K3">
    <property type="expression patterns" value="baseline and differential"/>
</dbReference>
<dbReference type="GO" id="GO:0016747">
    <property type="term" value="F:acyltransferase activity, transferring groups other than amino-acyl groups"/>
    <property type="evidence" value="ECO:0000318"/>
    <property type="project" value="GO_Central"/>
</dbReference>
<dbReference type="GO" id="GO:0050734">
    <property type="term" value="F:hydroxycinnamoyltransferase activity"/>
    <property type="evidence" value="ECO:0000314"/>
    <property type="project" value="UniProtKB"/>
</dbReference>
<dbReference type="FunFam" id="3.30.559.10:FF:000008">
    <property type="entry name" value="Tryptamine hydroxycinnamoyl transferase"/>
    <property type="match status" value="1"/>
</dbReference>
<dbReference type="Gene3D" id="3.30.559.10">
    <property type="entry name" value="Chloramphenicol acetyltransferase-like domain"/>
    <property type="match status" value="2"/>
</dbReference>
<dbReference type="InterPro" id="IPR023213">
    <property type="entry name" value="CAT-like_dom_sf"/>
</dbReference>
<dbReference type="InterPro" id="IPR050317">
    <property type="entry name" value="Plant_Fungal_Acyltransferase"/>
</dbReference>
<dbReference type="PANTHER" id="PTHR31642">
    <property type="entry name" value="TRICHOTHECENE 3-O-ACETYLTRANSFERASE"/>
    <property type="match status" value="1"/>
</dbReference>
<dbReference type="PANTHER" id="PTHR31642:SF331">
    <property type="entry name" value="TRYPTAMINE BENZOYLTRANSFERASE 2"/>
    <property type="match status" value="1"/>
</dbReference>
<dbReference type="Pfam" id="PF02458">
    <property type="entry name" value="Transferase"/>
    <property type="match status" value="1"/>
</dbReference>
<dbReference type="SUPFAM" id="SSF52777">
    <property type="entry name" value="CoA-dependent acyltransferases"/>
    <property type="match status" value="1"/>
</dbReference>
<reference key="1">
    <citation type="journal article" date="2005" name="BMC Biol.">
        <title>The sequence of rice chromosomes 11 and 12, rich in disease resistance genes and recent gene duplications.</title>
        <authorList>
            <consortium name="The rice chromosomes 11 and 12 sequencing consortia"/>
        </authorList>
    </citation>
    <scope>NUCLEOTIDE SEQUENCE [LARGE SCALE GENOMIC DNA]</scope>
    <source>
        <strain>cv. Nipponbare</strain>
    </source>
</reference>
<reference key="2">
    <citation type="journal article" date="2005" name="Nature">
        <title>The map-based sequence of the rice genome.</title>
        <authorList>
            <consortium name="International rice genome sequencing project (IRGSP)"/>
        </authorList>
    </citation>
    <scope>NUCLEOTIDE SEQUENCE [LARGE SCALE GENOMIC DNA]</scope>
    <source>
        <strain>cv. Nipponbare</strain>
    </source>
</reference>
<reference key="3">
    <citation type="journal article" date="2008" name="Nucleic Acids Res.">
        <title>The rice annotation project database (RAP-DB): 2008 update.</title>
        <authorList>
            <consortium name="The rice annotation project (RAP)"/>
        </authorList>
    </citation>
    <scope>GENOME REANNOTATION</scope>
    <source>
        <strain>cv. Nipponbare</strain>
    </source>
</reference>
<reference key="4">
    <citation type="journal article" date="2013" name="Rice">
        <title>Improvement of the Oryza sativa Nipponbare reference genome using next generation sequence and optical map data.</title>
        <authorList>
            <person name="Kawahara Y."/>
            <person name="de la Bastide M."/>
            <person name="Hamilton J.P."/>
            <person name="Kanamori H."/>
            <person name="McCombie W.R."/>
            <person name="Ouyang S."/>
            <person name="Schwartz D.C."/>
            <person name="Tanaka T."/>
            <person name="Wu J."/>
            <person name="Zhou S."/>
            <person name="Childs K.L."/>
            <person name="Davidson R.M."/>
            <person name="Lin H."/>
            <person name="Quesada-Ocampo L."/>
            <person name="Vaillancourt B."/>
            <person name="Sakai H."/>
            <person name="Lee S.S."/>
            <person name="Kim J."/>
            <person name="Numa H."/>
            <person name="Itoh T."/>
            <person name="Buell C.R."/>
            <person name="Matsumoto T."/>
        </authorList>
    </citation>
    <scope>GENOME REANNOTATION</scope>
    <source>
        <strain>cv. Nipponbare</strain>
    </source>
</reference>
<reference key="5">
    <citation type="submission" date="2006-10" db="EMBL/GenBank/DDBJ databases">
        <title>Oryza sativa full length cDNA.</title>
        <authorList>
            <consortium name="The rice full-length cDNA consortium"/>
        </authorList>
    </citation>
    <scope>NUCLEOTIDE SEQUENCE [LARGE SCALE MRNA]</scope>
    <source>
        <strain>cv. Nipponbare</strain>
    </source>
</reference>
<reference key="6">
    <citation type="journal article" date="2016" name="Plant Cell">
        <title>Evolutionarily distinct BAHD N-acyltransferases are responsible for natural variation of aromatic amine conjugates in rice.</title>
        <authorList>
            <person name="Peng M."/>
            <person name="Gao Y."/>
            <person name="Chen W."/>
            <person name="Wang W."/>
            <person name="Shen S."/>
            <person name="Shi J."/>
            <person name="Wang C."/>
            <person name="Zhang Y."/>
            <person name="Zou L."/>
            <person name="Wang S."/>
            <person name="Wan J."/>
            <person name="Liu X."/>
            <person name="Gong L."/>
            <person name="Luo J."/>
        </authorList>
    </citation>
    <scope>FUNCTION</scope>
    <scope>BIOPHYSICOCHEMICAL PROPERTIES</scope>
</reference>
<evidence type="ECO:0000250" key="1">
    <source>
        <dbReference type="UniProtKB" id="Q8W1W9"/>
    </source>
</evidence>
<evidence type="ECO:0000269" key="2">
    <source>
    </source>
</evidence>
<evidence type="ECO:0000303" key="3">
    <source>
    </source>
</evidence>
<evidence type="ECO:0000305" key="4"/>
<evidence type="ECO:0000312" key="5">
    <source>
        <dbReference type="EMBL" id="ABA95026.1"/>
    </source>
</evidence>
<evidence type="ECO:0000312" key="6">
    <source>
        <dbReference type="EMBL" id="BAT15019.1"/>
    </source>
</evidence>
<protein>
    <recommendedName>
        <fullName evidence="4">Tryptamine benzoyltransferase 1</fullName>
        <shortName evidence="3">OsTBT1</shortName>
        <ecNumber evidence="4">2.3.1.-</ecNumber>
    </recommendedName>
</protein>
<gene>
    <name evidence="3" type="primary">TBT1</name>
    <name evidence="6" type="ordered locus">Os11g0642400</name>
    <name evidence="5" type="ordered locus">LOC_Os11g42290</name>
</gene>
<organism>
    <name type="scientific">Oryza sativa subsp. japonica</name>
    <name type="common">Rice</name>
    <dbReference type="NCBI Taxonomy" id="39947"/>
    <lineage>
        <taxon>Eukaryota</taxon>
        <taxon>Viridiplantae</taxon>
        <taxon>Streptophyta</taxon>
        <taxon>Embryophyta</taxon>
        <taxon>Tracheophyta</taxon>
        <taxon>Spermatophyta</taxon>
        <taxon>Magnoliopsida</taxon>
        <taxon>Liliopsida</taxon>
        <taxon>Poales</taxon>
        <taxon>Poaceae</taxon>
        <taxon>BOP clade</taxon>
        <taxon>Oryzoideae</taxon>
        <taxon>Oryzeae</taxon>
        <taxon>Oryzinae</taxon>
        <taxon>Oryza</taxon>
        <taxon>Oryza sativa</taxon>
    </lineage>
</organism>